<comment type="function">
    <text evidence="1">With S4 and S5 plays an important role in translational accuracy. Located at the interface of the 30S and 50S subunits (By similarity).</text>
</comment>
<comment type="subunit">
    <text evidence="1">Part of the 30S ribosomal subunit.</text>
</comment>
<comment type="subcellular location">
    <subcellularLocation>
        <location>Plastid</location>
        <location>Chloroplast</location>
    </subcellularLocation>
</comment>
<comment type="similarity">
    <text evidence="2">Belongs to the universal ribosomal protein uS12 family.</text>
</comment>
<reference key="1">
    <citation type="journal article" date="2004" name="Gene">
        <title>The complete nucleotide sequence of wild rice (Oryza nivara) chloroplast genome: first genome wide comparative sequence analysis of wild and cultivated rice.</title>
        <authorList>
            <person name="Masood M.S."/>
            <person name="Nishikawa T."/>
            <person name="Fukuoka S."/>
            <person name="Njenga P.K."/>
            <person name="Tsudzuki T."/>
            <person name="Kadowaki K."/>
        </authorList>
    </citation>
    <scope>NUCLEOTIDE SEQUENCE [LARGE SCALE GENOMIC DNA]</scope>
    <source>
        <strain evidence="3">cv. SL10</strain>
    </source>
</reference>
<keyword id="KW-0150">Chloroplast</keyword>
<keyword id="KW-0934">Plastid</keyword>
<keyword id="KW-1185">Reference proteome</keyword>
<keyword id="KW-0687">Ribonucleoprotein</keyword>
<keyword id="KW-0689">Ribosomal protein</keyword>
<keyword id="KW-0694">RNA-binding</keyword>
<keyword id="KW-0699">rRNA-binding</keyword>
<proteinExistence type="inferred from homology"/>
<dbReference type="EMBL" id="AP006728">
    <property type="protein sequence ID" value="BAD26832.1"/>
    <property type="molecule type" value="Genomic_DNA"/>
</dbReference>
<dbReference type="RefSeq" id="YP_052725.1">
    <property type="nucleotide sequence ID" value="NC_005973.1"/>
</dbReference>
<dbReference type="RefSeq" id="YP_203383.1">
    <property type="nucleotide sequence ID" value="NC_005973.1"/>
</dbReference>
<dbReference type="SMR" id="Q6ENC0"/>
<dbReference type="STRING" id="4536.Q6ENC0"/>
<dbReference type="GeneID" id="2885891"/>
<dbReference type="GeneID" id="3276630"/>
<dbReference type="Proteomes" id="UP000006591">
    <property type="component" value="Chloroplast"/>
</dbReference>
<dbReference type="GO" id="GO:0009507">
    <property type="term" value="C:chloroplast"/>
    <property type="evidence" value="ECO:0007669"/>
    <property type="project" value="UniProtKB-SubCell"/>
</dbReference>
<dbReference type="GO" id="GO:0009536">
    <property type="term" value="C:plastid"/>
    <property type="evidence" value="ECO:0000305"/>
    <property type="project" value="Gramene"/>
</dbReference>
<dbReference type="GO" id="GO:0015935">
    <property type="term" value="C:small ribosomal subunit"/>
    <property type="evidence" value="ECO:0007669"/>
    <property type="project" value="InterPro"/>
</dbReference>
<dbReference type="GO" id="GO:0019843">
    <property type="term" value="F:rRNA binding"/>
    <property type="evidence" value="ECO:0007669"/>
    <property type="project" value="UniProtKB-UniRule"/>
</dbReference>
<dbReference type="GO" id="GO:0003735">
    <property type="term" value="F:structural constituent of ribosome"/>
    <property type="evidence" value="ECO:0007669"/>
    <property type="project" value="InterPro"/>
</dbReference>
<dbReference type="GO" id="GO:0006412">
    <property type="term" value="P:translation"/>
    <property type="evidence" value="ECO:0007669"/>
    <property type="project" value="UniProtKB-UniRule"/>
</dbReference>
<dbReference type="CDD" id="cd03368">
    <property type="entry name" value="Ribosomal_S12"/>
    <property type="match status" value="1"/>
</dbReference>
<dbReference type="FunFam" id="2.40.50.140:FF:000008">
    <property type="entry name" value="30S ribosomal protein S12, chloroplastic"/>
    <property type="match status" value="1"/>
</dbReference>
<dbReference type="Gene3D" id="2.40.50.140">
    <property type="entry name" value="Nucleic acid-binding proteins"/>
    <property type="match status" value="1"/>
</dbReference>
<dbReference type="HAMAP" id="MF_00403_B">
    <property type="entry name" value="Ribosomal_uS12_B"/>
    <property type="match status" value="1"/>
</dbReference>
<dbReference type="InterPro" id="IPR012340">
    <property type="entry name" value="NA-bd_OB-fold"/>
</dbReference>
<dbReference type="InterPro" id="IPR006032">
    <property type="entry name" value="Ribosomal_uS12"/>
</dbReference>
<dbReference type="InterPro" id="IPR005679">
    <property type="entry name" value="Ribosomal_uS12_bac"/>
</dbReference>
<dbReference type="NCBIfam" id="TIGR00981">
    <property type="entry name" value="rpsL_bact"/>
    <property type="match status" value="1"/>
</dbReference>
<dbReference type="PANTHER" id="PTHR11652">
    <property type="entry name" value="30S RIBOSOMAL PROTEIN S12 FAMILY MEMBER"/>
    <property type="match status" value="1"/>
</dbReference>
<dbReference type="Pfam" id="PF00164">
    <property type="entry name" value="Ribosom_S12_S23"/>
    <property type="match status" value="1"/>
</dbReference>
<dbReference type="PIRSF" id="PIRSF002133">
    <property type="entry name" value="Ribosomal_S12/S23"/>
    <property type="match status" value="1"/>
</dbReference>
<dbReference type="PRINTS" id="PR01034">
    <property type="entry name" value="RIBOSOMALS12"/>
</dbReference>
<dbReference type="SUPFAM" id="SSF50249">
    <property type="entry name" value="Nucleic acid-binding proteins"/>
    <property type="match status" value="1"/>
</dbReference>
<dbReference type="PROSITE" id="PS00055">
    <property type="entry name" value="RIBOSOMAL_S12"/>
    <property type="match status" value="1"/>
</dbReference>
<name>RR12_ORYNI</name>
<accession>Q6ENC0</accession>
<sequence length="124" mass="13820">MPTVKQLIRNARQPIRNARKSAALKGCPQRRGTCARVYTINPKKPNSALRKVARVRLTSGFEITAYIPGIGHNLQEHSVVLVRGGRVKDLPGVRYRIIRGALDAVAVKNRQQGRSKYGVKKPKK</sequence>
<evidence type="ECO:0000250" key="1"/>
<evidence type="ECO:0000305" key="2"/>
<evidence type="ECO:0000312" key="3">
    <source>
        <dbReference type="Proteomes" id="UP000006591"/>
    </source>
</evidence>
<organism>
    <name type="scientific">Oryza nivara</name>
    <name type="common">Indian wild rice</name>
    <name type="synonym">Oryza sativa f. spontanea</name>
    <dbReference type="NCBI Taxonomy" id="4536"/>
    <lineage>
        <taxon>Eukaryota</taxon>
        <taxon>Viridiplantae</taxon>
        <taxon>Streptophyta</taxon>
        <taxon>Embryophyta</taxon>
        <taxon>Tracheophyta</taxon>
        <taxon>Spermatophyta</taxon>
        <taxon>Magnoliopsida</taxon>
        <taxon>Liliopsida</taxon>
        <taxon>Poales</taxon>
        <taxon>Poaceae</taxon>
        <taxon>BOP clade</taxon>
        <taxon>Oryzoideae</taxon>
        <taxon>Oryzeae</taxon>
        <taxon>Oryzinae</taxon>
        <taxon>Oryza</taxon>
    </lineage>
</organism>
<feature type="chain" id="PRO_0000146414" description="Small ribosomal subunit protein uS12c">
    <location>
        <begin position="1"/>
        <end position="124"/>
    </location>
</feature>
<geneLocation type="chloroplast"/>
<protein>
    <recommendedName>
        <fullName evidence="2">Small ribosomal subunit protein uS12c</fullName>
    </recommendedName>
    <alternativeName>
        <fullName>30S ribosomal protein S12, chloroplastic</fullName>
    </alternativeName>
</protein>
<gene>
    <name type="primary">rps12</name>
</gene>